<organism>
    <name type="scientific">Parasynechococcus marenigrum (strain WH8102)</name>
    <dbReference type="NCBI Taxonomy" id="84588"/>
    <lineage>
        <taxon>Bacteria</taxon>
        <taxon>Bacillati</taxon>
        <taxon>Cyanobacteriota</taxon>
        <taxon>Cyanophyceae</taxon>
        <taxon>Synechococcales</taxon>
        <taxon>Prochlorococcaceae</taxon>
        <taxon>Parasynechococcus</taxon>
        <taxon>Parasynechococcus marenigrum</taxon>
    </lineage>
</organism>
<feature type="chain" id="PRO_0000091242" description="Elongation factor G">
    <location>
        <begin position="1"/>
        <end position="690"/>
    </location>
</feature>
<feature type="domain" description="tr-type G">
    <location>
        <begin position="8"/>
        <end position="282"/>
    </location>
</feature>
<feature type="binding site" evidence="1">
    <location>
        <begin position="17"/>
        <end position="24"/>
    </location>
    <ligand>
        <name>GTP</name>
        <dbReference type="ChEBI" id="CHEBI:37565"/>
    </ligand>
</feature>
<feature type="binding site" evidence="1">
    <location>
        <begin position="81"/>
        <end position="85"/>
    </location>
    <ligand>
        <name>GTP</name>
        <dbReference type="ChEBI" id="CHEBI:37565"/>
    </ligand>
</feature>
<feature type="binding site" evidence="1">
    <location>
        <begin position="135"/>
        <end position="138"/>
    </location>
    <ligand>
        <name>GTP</name>
        <dbReference type="ChEBI" id="CHEBI:37565"/>
    </ligand>
</feature>
<accession>Q7U4D2</accession>
<protein>
    <recommendedName>
        <fullName evidence="1">Elongation factor G</fullName>
        <shortName evidence="1">EF-G</shortName>
    </recommendedName>
</protein>
<reference key="1">
    <citation type="journal article" date="2003" name="Nature">
        <title>The genome of a motile marine Synechococcus.</title>
        <authorList>
            <person name="Palenik B."/>
            <person name="Brahamsha B."/>
            <person name="Larimer F.W."/>
            <person name="Land M.L."/>
            <person name="Hauser L."/>
            <person name="Chain P."/>
            <person name="Lamerdin J.E."/>
            <person name="Regala W."/>
            <person name="Allen E.E."/>
            <person name="McCarren J."/>
            <person name="Paulsen I.T."/>
            <person name="Dufresne A."/>
            <person name="Partensky F."/>
            <person name="Webb E.A."/>
            <person name="Waterbury J."/>
        </authorList>
    </citation>
    <scope>NUCLEOTIDE SEQUENCE [LARGE SCALE GENOMIC DNA]</scope>
    <source>
        <strain>WH8102</strain>
    </source>
</reference>
<name>EFG_PARMW</name>
<gene>
    <name evidence="1" type="primary">fusA</name>
    <name type="ordered locus">SYNW2137</name>
</gene>
<keyword id="KW-0963">Cytoplasm</keyword>
<keyword id="KW-0251">Elongation factor</keyword>
<keyword id="KW-0342">GTP-binding</keyword>
<keyword id="KW-0547">Nucleotide-binding</keyword>
<keyword id="KW-0648">Protein biosynthesis</keyword>
<sequence>MARDFPLERVRNIGIAAHIDAGKTTTTERILFYSGVVHKIGEVHDGAAVTDWMAQERERGITITAAAISTSWQDHRINIIDTPGHVDFTIEVERSMRVLDGVIAVFCAVGGVQPQSETVWRQADRYSVPRMVFVNKMDRTGADFLKVHGQIKDRLKANAVPIQLPIGAEGDLSGIIDLVGNKAYIYKNDLGTDIEEAEIPAEMADEAAEWRATLMETIAETDEALIEKFLETGELSTEELKKGIREGVLKHGLVPMLCGSAFKNKGVQLVLDAVIDYLPAPVDVPPIQGVLPDGKEAVRPSDDKAPFSALAFKVMADPYGKLTFVRMYSGILEKGSYVLNSTKGEKERISRLVVLKADDREEVDALRAGDLGAVLGLKNTTTGDTLCTQDDPIVLETLFIPEPVISVAVEPKTKGDMEKLSKALVSLAEEDPTFRVNTDSETGQTVIAGMGELHLEILVDRMLREFKVEANIGAPQVSYRETIRGSAGGEGKFSRQTGGKGQYGHVVIEMEPGEPGSGFEFVNKIVGGIVPKEYIKPAEQGMRETCESGVIAGYPLIDVRCTLVHGSYHDVDSSEMAFKIAGSMAFKDGVKKCNPVLLEPMMKVEVEVPEDFLGSIIGDLSSRRGQVEGQGVEDGTSKISAKVPLAEMFGYATELRSMTQGRGIFSMEFDNYAEVPRNVAEAIISKNQGN</sequence>
<proteinExistence type="inferred from homology"/>
<evidence type="ECO:0000255" key="1">
    <source>
        <dbReference type="HAMAP-Rule" id="MF_00054"/>
    </source>
</evidence>
<comment type="function">
    <text evidence="1">Catalyzes the GTP-dependent ribosomal translocation step during translation elongation. During this step, the ribosome changes from the pre-translocational (PRE) to the post-translocational (POST) state as the newly formed A-site-bound peptidyl-tRNA and P-site-bound deacylated tRNA move to the P and E sites, respectively. Catalyzes the coordinated movement of the two tRNA molecules, the mRNA and conformational changes in the ribosome.</text>
</comment>
<comment type="subcellular location">
    <subcellularLocation>
        <location evidence="1">Cytoplasm</location>
    </subcellularLocation>
</comment>
<comment type="similarity">
    <text evidence="1">Belongs to the TRAFAC class translation factor GTPase superfamily. Classic translation factor GTPase family. EF-G/EF-2 subfamily.</text>
</comment>
<dbReference type="EMBL" id="BX569694">
    <property type="protein sequence ID" value="CAE08652.1"/>
    <property type="molecule type" value="Genomic_DNA"/>
</dbReference>
<dbReference type="RefSeq" id="WP_011128993.1">
    <property type="nucleotide sequence ID" value="NC_005070.1"/>
</dbReference>
<dbReference type="SMR" id="Q7U4D2"/>
<dbReference type="STRING" id="84588.SYNW2137"/>
<dbReference type="KEGG" id="syw:SYNW2137"/>
<dbReference type="eggNOG" id="COG0480">
    <property type="taxonomic scope" value="Bacteria"/>
</dbReference>
<dbReference type="HOGENOM" id="CLU_002794_4_1_3"/>
<dbReference type="Proteomes" id="UP000001422">
    <property type="component" value="Chromosome"/>
</dbReference>
<dbReference type="GO" id="GO:0005737">
    <property type="term" value="C:cytoplasm"/>
    <property type="evidence" value="ECO:0007669"/>
    <property type="project" value="UniProtKB-SubCell"/>
</dbReference>
<dbReference type="GO" id="GO:0005525">
    <property type="term" value="F:GTP binding"/>
    <property type="evidence" value="ECO:0007669"/>
    <property type="project" value="UniProtKB-UniRule"/>
</dbReference>
<dbReference type="GO" id="GO:0003924">
    <property type="term" value="F:GTPase activity"/>
    <property type="evidence" value="ECO:0007669"/>
    <property type="project" value="InterPro"/>
</dbReference>
<dbReference type="GO" id="GO:0003746">
    <property type="term" value="F:translation elongation factor activity"/>
    <property type="evidence" value="ECO:0007669"/>
    <property type="project" value="UniProtKB-UniRule"/>
</dbReference>
<dbReference type="GO" id="GO:0032790">
    <property type="term" value="P:ribosome disassembly"/>
    <property type="evidence" value="ECO:0007669"/>
    <property type="project" value="TreeGrafter"/>
</dbReference>
<dbReference type="CDD" id="cd01886">
    <property type="entry name" value="EF-G"/>
    <property type="match status" value="1"/>
</dbReference>
<dbReference type="CDD" id="cd16262">
    <property type="entry name" value="EFG_III"/>
    <property type="match status" value="1"/>
</dbReference>
<dbReference type="CDD" id="cd01434">
    <property type="entry name" value="EFG_mtEFG1_IV"/>
    <property type="match status" value="1"/>
</dbReference>
<dbReference type="CDD" id="cd03713">
    <property type="entry name" value="EFG_mtEFG_C"/>
    <property type="match status" value="1"/>
</dbReference>
<dbReference type="CDD" id="cd04088">
    <property type="entry name" value="EFG_mtEFG_II"/>
    <property type="match status" value="1"/>
</dbReference>
<dbReference type="FunFam" id="2.40.30.10:FF:000006">
    <property type="entry name" value="Elongation factor G"/>
    <property type="match status" value="1"/>
</dbReference>
<dbReference type="FunFam" id="3.30.230.10:FF:000003">
    <property type="entry name" value="Elongation factor G"/>
    <property type="match status" value="1"/>
</dbReference>
<dbReference type="FunFam" id="3.30.70.240:FF:000001">
    <property type="entry name" value="Elongation factor G"/>
    <property type="match status" value="1"/>
</dbReference>
<dbReference type="FunFam" id="3.30.70.870:FF:000001">
    <property type="entry name" value="Elongation factor G"/>
    <property type="match status" value="1"/>
</dbReference>
<dbReference type="FunFam" id="3.40.50.300:FF:000029">
    <property type="entry name" value="Elongation factor G"/>
    <property type="match status" value="1"/>
</dbReference>
<dbReference type="Gene3D" id="3.30.230.10">
    <property type="match status" value="1"/>
</dbReference>
<dbReference type="Gene3D" id="3.30.70.240">
    <property type="match status" value="1"/>
</dbReference>
<dbReference type="Gene3D" id="3.30.70.870">
    <property type="entry name" value="Elongation Factor G (Translational Gtpase), domain 3"/>
    <property type="match status" value="1"/>
</dbReference>
<dbReference type="Gene3D" id="3.40.50.300">
    <property type="entry name" value="P-loop containing nucleotide triphosphate hydrolases"/>
    <property type="match status" value="1"/>
</dbReference>
<dbReference type="Gene3D" id="2.40.30.10">
    <property type="entry name" value="Translation factors"/>
    <property type="match status" value="1"/>
</dbReference>
<dbReference type="HAMAP" id="MF_00054_B">
    <property type="entry name" value="EF_G_EF_2_B"/>
    <property type="match status" value="1"/>
</dbReference>
<dbReference type="InterPro" id="IPR041095">
    <property type="entry name" value="EFG_II"/>
</dbReference>
<dbReference type="InterPro" id="IPR009022">
    <property type="entry name" value="EFG_III"/>
</dbReference>
<dbReference type="InterPro" id="IPR035647">
    <property type="entry name" value="EFG_III/V"/>
</dbReference>
<dbReference type="InterPro" id="IPR047872">
    <property type="entry name" value="EFG_IV"/>
</dbReference>
<dbReference type="InterPro" id="IPR035649">
    <property type="entry name" value="EFG_V"/>
</dbReference>
<dbReference type="InterPro" id="IPR000640">
    <property type="entry name" value="EFG_V-like"/>
</dbReference>
<dbReference type="InterPro" id="IPR004161">
    <property type="entry name" value="EFTu-like_2"/>
</dbReference>
<dbReference type="InterPro" id="IPR031157">
    <property type="entry name" value="G_TR_CS"/>
</dbReference>
<dbReference type="InterPro" id="IPR027417">
    <property type="entry name" value="P-loop_NTPase"/>
</dbReference>
<dbReference type="InterPro" id="IPR020568">
    <property type="entry name" value="Ribosomal_Su5_D2-typ_SF"/>
</dbReference>
<dbReference type="InterPro" id="IPR014721">
    <property type="entry name" value="Ribsml_uS5_D2-typ_fold_subgr"/>
</dbReference>
<dbReference type="InterPro" id="IPR005225">
    <property type="entry name" value="Small_GTP-bd"/>
</dbReference>
<dbReference type="InterPro" id="IPR000795">
    <property type="entry name" value="T_Tr_GTP-bd_dom"/>
</dbReference>
<dbReference type="InterPro" id="IPR009000">
    <property type="entry name" value="Transl_B-barrel_sf"/>
</dbReference>
<dbReference type="InterPro" id="IPR004540">
    <property type="entry name" value="Transl_elong_EFG/EF2"/>
</dbReference>
<dbReference type="InterPro" id="IPR005517">
    <property type="entry name" value="Transl_elong_EFG/EF2_IV"/>
</dbReference>
<dbReference type="NCBIfam" id="TIGR00484">
    <property type="entry name" value="EF-G"/>
    <property type="match status" value="1"/>
</dbReference>
<dbReference type="NCBIfam" id="NF009379">
    <property type="entry name" value="PRK12740.1-3"/>
    <property type="match status" value="1"/>
</dbReference>
<dbReference type="NCBIfam" id="NF009381">
    <property type="entry name" value="PRK12740.1-5"/>
    <property type="match status" value="1"/>
</dbReference>
<dbReference type="NCBIfam" id="TIGR00231">
    <property type="entry name" value="small_GTP"/>
    <property type="match status" value="1"/>
</dbReference>
<dbReference type="PANTHER" id="PTHR43261:SF1">
    <property type="entry name" value="RIBOSOME-RELEASING FACTOR 2, MITOCHONDRIAL"/>
    <property type="match status" value="1"/>
</dbReference>
<dbReference type="PANTHER" id="PTHR43261">
    <property type="entry name" value="TRANSLATION ELONGATION FACTOR G-RELATED"/>
    <property type="match status" value="1"/>
</dbReference>
<dbReference type="Pfam" id="PF00679">
    <property type="entry name" value="EFG_C"/>
    <property type="match status" value="1"/>
</dbReference>
<dbReference type="Pfam" id="PF14492">
    <property type="entry name" value="EFG_III"/>
    <property type="match status" value="1"/>
</dbReference>
<dbReference type="Pfam" id="PF03764">
    <property type="entry name" value="EFG_IV"/>
    <property type="match status" value="1"/>
</dbReference>
<dbReference type="Pfam" id="PF00009">
    <property type="entry name" value="GTP_EFTU"/>
    <property type="match status" value="1"/>
</dbReference>
<dbReference type="Pfam" id="PF03144">
    <property type="entry name" value="GTP_EFTU_D2"/>
    <property type="match status" value="1"/>
</dbReference>
<dbReference type="PRINTS" id="PR00315">
    <property type="entry name" value="ELONGATNFCT"/>
</dbReference>
<dbReference type="SMART" id="SM00838">
    <property type="entry name" value="EFG_C"/>
    <property type="match status" value="1"/>
</dbReference>
<dbReference type="SMART" id="SM00889">
    <property type="entry name" value="EFG_IV"/>
    <property type="match status" value="1"/>
</dbReference>
<dbReference type="SUPFAM" id="SSF54980">
    <property type="entry name" value="EF-G C-terminal domain-like"/>
    <property type="match status" value="2"/>
</dbReference>
<dbReference type="SUPFAM" id="SSF52540">
    <property type="entry name" value="P-loop containing nucleoside triphosphate hydrolases"/>
    <property type="match status" value="1"/>
</dbReference>
<dbReference type="SUPFAM" id="SSF54211">
    <property type="entry name" value="Ribosomal protein S5 domain 2-like"/>
    <property type="match status" value="1"/>
</dbReference>
<dbReference type="SUPFAM" id="SSF50447">
    <property type="entry name" value="Translation proteins"/>
    <property type="match status" value="1"/>
</dbReference>
<dbReference type="PROSITE" id="PS00301">
    <property type="entry name" value="G_TR_1"/>
    <property type="match status" value="1"/>
</dbReference>
<dbReference type="PROSITE" id="PS51722">
    <property type="entry name" value="G_TR_2"/>
    <property type="match status" value="1"/>
</dbReference>